<dbReference type="EMBL" id="AE005176">
    <property type="protein sequence ID" value="AAK04693.1"/>
    <property type="molecule type" value="Genomic_DNA"/>
</dbReference>
<dbReference type="PIR" id="C86699">
    <property type="entry name" value="C86699"/>
</dbReference>
<dbReference type="RefSeq" id="NP_266751.1">
    <property type="nucleotide sequence ID" value="NC_002662.1"/>
</dbReference>
<dbReference type="RefSeq" id="WP_003129495.1">
    <property type="nucleotide sequence ID" value="NC_002662.1"/>
</dbReference>
<dbReference type="SMR" id="Q9CHX3"/>
<dbReference type="PaxDb" id="272623-L0373"/>
<dbReference type="EnsemblBacteria" id="AAK04693">
    <property type="protein sequence ID" value="AAK04693"/>
    <property type="gene ID" value="L0373"/>
</dbReference>
<dbReference type="GeneID" id="89632712"/>
<dbReference type="KEGG" id="lla:L0373"/>
<dbReference type="PATRIC" id="fig|272623.7.peg.635"/>
<dbReference type="eggNOG" id="COG0216">
    <property type="taxonomic scope" value="Bacteria"/>
</dbReference>
<dbReference type="HOGENOM" id="CLU_036856_0_1_9"/>
<dbReference type="OrthoDB" id="9806673at2"/>
<dbReference type="Proteomes" id="UP000002196">
    <property type="component" value="Chromosome"/>
</dbReference>
<dbReference type="GO" id="GO:0005737">
    <property type="term" value="C:cytoplasm"/>
    <property type="evidence" value="ECO:0007669"/>
    <property type="project" value="UniProtKB-SubCell"/>
</dbReference>
<dbReference type="GO" id="GO:0016149">
    <property type="term" value="F:translation release factor activity, codon specific"/>
    <property type="evidence" value="ECO:0007669"/>
    <property type="project" value="UniProtKB-UniRule"/>
</dbReference>
<dbReference type="FunFam" id="3.30.160.20:FF:000027">
    <property type="entry name" value="Peptide chain release factor 1"/>
    <property type="match status" value="1"/>
</dbReference>
<dbReference type="FunFam" id="3.30.70.1660:FF:000002">
    <property type="entry name" value="Peptide chain release factor 1"/>
    <property type="match status" value="1"/>
</dbReference>
<dbReference type="FunFam" id="3.30.70.1660:FF:000004">
    <property type="entry name" value="Peptide chain release factor 1"/>
    <property type="match status" value="1"/>
</dbReference>
<dbReference type="Gene3D" id="3.30.160.20">
    <property type="match status" value="1"/>
</dbReference>
<dbReference type="Gene3D" id="3.30.70.1660">
    <property type="match status" value="2"/>
</dbReference>
<dbReference type="Gene3D" id="6.10.140.1950">
    <property type="match status" value="1"/>
</dbReference>
<dbReference type="HAMAP" id="MF_00093">
    <property type="entry name" value="Rel_fac_1"/>
    <property type="match status" value="1"/>
</dbReference>
<dbReference type="InterPro" id="IPR005139">
    <property type="entry name" value="PCRF"/>
</dbReference>
<dbReference type="InterPro" id="IPR000352">
    <property type="entry name" value="Pep_chain_release_fac_I"/>
</dbReference>
<dbReference type="InterPro" id="IPR045853">
    <property type="entry name" value="Pep_chain_release_fac_I_sf"/>
</dbReference>
<dbReference type="InterPro" id="IPR050057">
    <property type="entry name" value="Prokaryotic/Mito_RF"/>
</dbReference>
<dbReference type="InterPro" id="IPR004373">
    <property type="entry name" value="RF-1"/>
</dbReference>
<dbReference type="NCBIfam" id="TIGR00019">
    <property type="entry name" value="prfA"/>
    <property type="match status" value="1"/>
</dbReference>
<dbReference type="NCBIfam" id="NF001859">
    <property type="entry name" value="PRK00591.1"/>
    <property type="match status" value="1"/>
</dbReference>
<dbReference type="PANTHER" id="PTHR43804">
    <property type="entry name" value="LD18447P"/>
    <property type="match status" value="1"/>
</dbReference>
<dbReference type="PANTHER" id="PTHR43804:SF7">
    <property type="entry name" value="LD18447P"/>
    <property type="match status" value="1"/>
</dbReference>
<dbReference type="Pfam" id="PF03462">
    <property type="entry name" value="PCRF"/>
    <property type="match status" value="1"/>
</dbReference>
<dbReference type="Pfam" id="PF00472">
    <property type="entry name" value="RF-1"/>
    <property type="match status" value="1"/>
</dbReference>
<dbReference type="SMART" id="SM00937">
    <property type="entry name" value="PCRF"/>
    <property type="match status" value="1"/>
</dbReference>
<dbReference type="SUPFAM" id="SSF75620">
    <property type="entry name" value="Release factor"/>
    <property type="match status" value="1"/>
</dbReference>
<dbReference type="PROSITE" id="PS00745">
    <property type="entry name" value="RF_PROK_I"/>
    <property type="match status" value="1"/>
</dbReference>
<sequence>MFDQLESIVGRYEELGELLSDPEVVSDTKRFMELSREEADLRDKVATYNEYKKVLETISDSEEMLGEGGLDDDMKEMLKEELSSAKSQKELLEEEIKILLLPKDPNDGKNIILEIRGAAGGDEAALFAGDLLNMYQHFSESQGWKFEIMEANITGIGGYKEVSALISGPSVYSKLKYESGAHRVQRVPVTETQGRVHTSTATVLVMPEVEEFEMTIDQKDLRVDIYHASGAGGQNVNKVATAVRMVHLPTGIKVEMQEERTQQKNRDKAIKLLNTKVFDYYQQIELDKQNAERKSTVGTGDRSERIRTYNFPQNRVTDHRIGLTLQKLDSILSGKMDEVIDALIVYDQTKKLEELNK</sequence>
<feature type="chain" id="PRO_0000177685" description="Peptide chain release factor 1">
    <location>
        <begin position="1"/>
        <end position="357"/>
    </location>
</feature>
<feature type="modified residue" description="N5-methylglutamine" evidence="1">
    <location>
        <position position="234"/>
    </location>
</feature>
<keyword id="KW-0963">Cytoplasm</keyword>
<keyword id="KW-0488">Methylation</keyword>
<keyword id="KW-0648">Protein biosynthesis</keyword>
<keyword id="KW-1185">Reference proteome</keyword>
<name>RF1_LACLA</name>
<organism>
    <name type="scientific">Lactococcus lactis subsp. lactis (strain IL1403)</name>
    <name type="common">Streptococcus lactis</name>
    <dbReference type="NCBI Taxonomy" id="272623"/>
    <lineage>
        <taxon>Bacteria</taxon>
        <taxon>Bacillati</taxon>
        <taxon>Bacillota</taxon>
        <taxon>Bacilli</taxon>
        <taxon>Lactobacillales</taxon>
        <taxon>Streptococcaceae</taxon>
        <taxon>Lactococcus</taxon>
    </lineage>
</organism>
<protein>
    <recommendedName>
        <fullName>Peptide chain release factor 1</fullName>
        <shortName>RF-1</shortName>
    </recommendedName>
</protein>
<reference key="1">
    <citation type="journal article" date="2001" name="Genome Res.">
        <title>The complete genome sequence of the lactic acid bacterium Lactococcus lactis ssp. lactis IL1403.</title>
        <authorList>
            <person name="Bolotin A."/>
            <person name="Wincker P."/>
            <person name="Mauger S."/>
            <person name="Jaillon O."/>
            <person name="Malarme K."/>
            <person name="Weissenbach J."/>
            <person name="Ehrlich S.D."/>
            <person name="Sorokin A."/>
        </authorList>
    </citation>
    <scope>NUCLEOTIDE SEQUENCE [LARGE SCALE GENOMIC DNA]</scope>
    <source>
        <strain>IL1403</strain>
    </source>
</reference>
<evidence type="ECO:0000250" key="1"/>
<evidence type="ECO:0000305" key="2"/>
<gene>
    <name type="primary">prfA</name>
    <name type="ordered locus">LL0595</name>
    <name type="ORF">L0373</name>
</gene>
<accession>Q9CHX3</accession>
<comment type="function">
    <text evidence="1">Peptide chain release factor 1 directs the termination of translation in response to the peptide chain termination codons UAG and UAA.</text>
</comment>
<comment type="subcellular location">
    <subcellularLocation>
        <location evidence="1">Cytoplasm</location>
    </subcellularLocation>
</comment>
<comment type="PTM">
    <text evidence="1">Methylated by PrmC. Methylation increases the termination efficiency of RF1 (By similarity).</text>
</comment>
<comment type="similarity">
    <text evidence="2">Belongs to the prokaryotic/mitochondrial release factor family.</text>
</comment>
<proteinExistence type="inferred from homology"/>